<keyword id="KW-0488">Methylation</keyword>
<keyword id="KW-0687">Ribonucleoprotein</keyword>
<keyword id="KW-0689">Ribosomal protein</keyword>
<keyword id="KW-0694">RNA-binding</keyword>
<keyword id="KW-0699">rRNA-binding</keyword>
<feature type="chain" id="PRO_0000258221" description="Large ribosomal subunit protein uL11">
    <location>
        <begin position="1"/>
        <end position="141"/>
    </location>
</feature>
<name>RL11_STRPB</name>
<gene>
    <name evidence="1" type="primary">rplK</name>
    <name type="ordered locus">MGAS2096_Spy0395</name>
</gene>
<comment type="function">
    <text evidence="1">Forms part of the ribosomal stalk which helps the ribosome interact with GTP-bound translation factors.</text>
</comment>
<comment type="subunit">
    <text evidence="1">Part of the ribosomal stalk of the 50S ribosomal subunit. Interacts with L10 and the large rRNA to form the base of the stalk. L10 forms an elongated spine to which L12 dimers bind in a sequential fashion forming a multimeric L10(L12)X complex.</text>
</comment>
<comment type="PTM">
    <text evidence="1">One or more lysine residues are methylated.</text>
</comment>
<comment type="similarity">
    <text evidence="1">Belongs to the universal ribosomal protein uL11 family.</text>
</comment>
<comment type="sequence caution" evidence="2">
    <conflict type="erroneous initiation">
        <sequence resource="EMBL-CDS" id="ABF35447"/>
    </conflict>
</comment>
<reference key="1">
    <citation type="journal article" date="2006" name="Proc. Natl. Acad. Sci. U.S.A.">
        <title>Molecular genetic anatomy of inter- and intraserotype variation in the human bacterial pathogen group A Streptococcus.</title>
        <authorList>
            <person name="Beres S.B."/>
            <person name="Richter E.W."/>
            <person name="Nagiec M.J."/>
            <person name="Sumby P."/>
            <person name="Porcella S.F."/>
            <person name="DeLeo F.R."/>
            <person name="Musser J.M."/>
        </authorList>
    </citation>
    <scope>NUCLEOTIDE SEQUENCE [LARGE SCALE GENOMIC DNA]</scope>
    <source>
        <strain>MGAS2096</strain>
    </source>
</reference>
<accession>Q1JD61</accession>
<proteinExistence type="inferred from homology"/>
<sequence>MAKKVEKLVKLQIPAGKATPAPPVGPALGQAGINIMGFTKEFNARTADQAGMIIPVVISVYEDKSFDFITKTPPAAVLLKKAAGVEKGSGTPNTTKVATVTRAQVQEIAETKMPDLNAANIEAAMRMIEGTARSMGFTVTD</sequence>
<evidence type="ECO:0000255" key="1">
    <source>
        <dbReference type="HAMAP-Rule" id="MF_00736"/>
    </source>
</evidence>
<evidence type="ECO:0000305" key="2"/>
<protein>
    <recommendedName>
        <fullName evidence="1">Large ribosomal subunit protein uL11</fullName>
    </recommendedName>
    <alternativeName>
        <fullName evidence="2">50S ribosomal protein L11</fullName>
    </alternativeName>
</protein>
<dbReference type="EMBL" id="CP000261">
    <property type="protein sequence ID" value="ABF35447.1"/>
    <property type="status" value="ALT_INIT"/>
    <property type="molecule type" value="Genomic_DNA"/>
</dbReference>
<dbReference type="SMR" id="Q1JD61"/>
<dbReference type="KEGG" id="spj:MGAS2096_Spy0395"/>
<dbReference type="HOGENOM" id="CLU_074237_2_1_9"/>
<dbReference type="GO" id="GO:0022625">
    <property type="term" value="C:cytosolic large ribosomal subunit"/>
    <property type="evidence" value="ECO:0007669"/>
    <property type="project" value="TreeGrafter"/>
</dbReference>
<dbReference type="GO" id="GO:0070180">
    <property type="term" value="F:large ribosomal subunit rRNA binding"/>
    <property type="evidence" value="ECO:0007669"/>
    <property type="project" value="UniProtKB-UniRule"/>
</dbReference>
<dbReference type="GO" id="GO:0003735">
    <property type="term" value="F:structural constituent of ribosome"/>
    <property type="evidence" value="ECO:0007669"/>
    <property type="project" value="InterPro"/>
</dbReference>
<dbReference type="GO" id="GO:0006412">
    <property type="term" value="P:translation"/>
    <property type="evidence" value="ECO:0007669"/>
    <property type="project" value="UniProtKB-UniRule"/>
</dbReference>
<dbReference type="CDD" id="cd00349">
    <property type="entry name" value="Ribosomal_L11"/>
    <property type="match status" value="1"/>
</dbReference>
<dbReference type="FunFam" id="1.10.10.250:FF:000001">
    <property type="entry name" value="50S ribosomal protein L11"/>
    <property type="match status" value="1"/>
</dbReference>
<dbReference type="FunFam" id="3.30.1550.10:FF:000001">
    <property type="entry name" value="50S ribosomal protein L11"/>
    <property type="match status" value="1"/>
</dbReference>
<dbReference type="Gene3D" id="1.10.10.250">
    <property type="entry name" value="Ribosomal protein L11, C-terminal domain"/>
    <property type="match status" value="1"/>
</dbReference>
<dbReference type="Gene3D" id="3.30.1550.10">
    <property type="entry name" value="Ribosomal protein L11/L12, N-terminal domain"/>
    <property type="match status" value="1"/>
</dbReference>
<dbReference type="HAMAP" id="MF_00736">
    <property type="entry name" value="Ribosomal_uL11"/>
    <property type="match status" value="1"/>
</dbReference>
<dbReference type="InterPro" id="IPR000911">
    <property type="entry name" value="Ribosomal_uL11"/>
</dbReference>
<dbReference type="InterPro" id="IPR006519">
    <property type="entry name" value="Ribosomal_uL11_bac-typ"/>
</dbReference>
<dbReference type="InterPro" id="IPR020783">
    <property type="entry name" value="Ribosomal_uL11_C"/>
</dbReference>
<dbReference type="InterPro" id="IPR036769">
    <property type="entry name" value="Ribosomal_uL11_C_sf"/>
</dbReference>
<dbReference type="InterPro" id="IPR020785">
    <property type="entry name" value="Ribosomal_uL11_CS"/>
</dbReference>
<dbReference type="InterPro" id="IPR020784">
    <property type="entry name" value="Ribosomal_uL11_N"/>
</dbReference>
<dbReference type="InterPro" id="IPR036796">
    <property type="entry name" value="Ribosomal_uL11_N_sf"/>
</dbReference>
<dbReference type="NCBIfam" id="TIGR01632">
    <property type="entry name" value="L11_bact"/>
    <property type="match status" value="1"/>
</dbReference>
<dbReference type="PANTHER" id="PTHR11661">
    <property type="entry name" value="60S RIBOSOMAL PROTEIN L12"/>
    <property type="match status" value="1"/>
</dbReference>
<dbReference type="PANTHER" id="PTHR11661:SF1">
    <property type="entry name" value="LARGE RIBOSOMAL SUBUNIT PROTEIN UL11M"/>
    <property type="match status" value="1"/>
</dbReference>
<dbReference type="Pfam" id="PF00298">
    <property type="entry name" value="Ribosomal_L11"/>
    <property type="match status" value="1"/>
</dbReference>
<dbReference type="Pfam" id="PF03946">
    <property type="entry name" value="Ribosomal_L11_N"/>
    <property type="match status" value="1"/>
</dbReference>
<dbReference type="SMART" id="SM00649">
    <property type="entry name" value="RL11"/>
    <property type="match status" value="1"/>
</dbReference>
<dbReference type="SUPFAM" id="SSF54747">
    <property type="entry name" value="Ribosomal L11/L12e N-terminal domain"/>
    <property type="match status" value="1"/>
</dbReference>
<dbReference type="SUPFAM" id="SSF46906">
    <property type="entry name" value="Ribosomal protein L11, C-terminal domain"/>
    <property type="match status" value="1"/>
</dbReference>
<dbReference type="PROSITE" id="PS00359">
    <property type="entry name" value="RIBOSOMAL_L11"/>
    <property type="match status" value="1"/>
</dbReference>
<organism>
    <name type="scientific">Streptococcus pyogenes serotype M12 (strain MGAS2096)</name>
    <dbReference type="NCBI Taxonomy" id="370553"/>
    <lineage>
        <taxon>Bacteria</taxon>
        <taxon>Bacillati</taxon>
        <taxon>Bacillota</taxon>
        <taxon>Bacilli</taxon>
        <taxon>Lactobacillales</taxon>
        <taxon>Streptococcaceae</taxon>
        <taxon>Streptococcus</taxon>
    </lineage>
</organism>